<keyword id="KW-0963">Cytoplasm</keyword>
<keyword id="KW-0460">Magnesium</keyword>
<keyword id="KW-0479">Metal-binding</keyword>
<keyword id="KW-0566">Pantothenate biosynthesis</keyword>
<keyword id="KW-1185">Reference proteome</keyword>
<keyword id="KW-0808">Transferase</keyword>
<comment type="function">
    <text evidence="1">Catalyzes the reversible reaction in which hydroxymethyl group from 5,10-methylenetetrahydrofolate is transferred onto alpha-ketoisovalerate to form ketopantoate.</text>
</comment>
<comment type="catalytic activity">
    <reaction evidence="1">
        <text>3-methyl-2-oxobutanoate + (6R)-5,10-methylene-5,6,7,8-tetrahydrofolate + H2O = 2-dehydropantoate + (6S)-5,6,7,8-tetrahydrofolate</text>
        <dbReference type="Rhea" id="RHEA:11824"/>
        <dbReference type="ChEBI" id="CHEBI:11561"/>
        <dbReference type="ChEBI" id="CHEBI:11851"/>
        <dbReference type="ChEBI" id="CHEBI:15377"/>
        <dbReference type="ChEBI" id="CHEBI:15636"/>
        <dbReference type="ChEBI" id="CHEBI:57453"/>
        <dbReference type="EC" id="2.1.2.11"/>
    </reaction>
</comment>
<comment type="cofactor">
    <cofactor evidence="1">
        <name>Mg(2+)</name>
        <dbReference type="ChEBI" id="CHEBI:18420"/>
    </cofactor>
    <text evidence="1">Binds 1 Mg(2+) ion per subunit.</text>
</comment>
<comment type="pathway">
    <text evidence="1">Cofactor biosynthesis; (R)-pantothenate biosynthesis; (R)-pantoate from 3-methyl-2-oxobutanoate: step 1/2.</text>
</comment>
<comment type="subunit">
    <text evidence="1">Homodecamer; pentamer of dimers.</text>
</comment>
<comment type="subcellular location">
    <subcellularLocation>
        <location evidence="1">Cytoplasm</location>
    </subcellularLocation>
</comment>
<comment type="similarity">
    <text evidence="1">Belongs to the PanB family.</text>
</comment>
<feature type="chain" id="PRO_0000297248" description="3-methyl-2-oxobutanoate hydroxymethyltransferase">
    <location>
        <begin position="1"/>
        <end position="283"/>
    </location>
</feature>
<feature type="active site" description="Proton acceptor" evidence="1">
    <location>
        <position position="184"/>
    </location>
</feature>
<feature type="binding site" evidence="1">
    <location>
        <begin position="46"/>
        <end position="47"/>
    </location>
    <ligand>
        <name>3-methyl-2-oxobutanoate</name>
        <dbReference type="ChEBI" id="CHEBI:11851"/>
    </ligand>
</feature>
<feature type="binding site" evidence="1">
    <location>
        <position position="46"/>
    </location>
    <ligand>
        <name>Mg(2+)</name>
        <dbReference type="ChEBI" id="CHEBI:18420"/>
    </ligand>
</feature>
<feature type="binding site" evidence="1">
    <location>
        <position position="85"/>
    </location>
    <ligand>
        <name>3-methyl-2-oxobutanoate</name>
        <dbReference type="ChEBI" id="CHEBI:11851"/>
    </ligand>
</feature>
<feature type="binding site" evidence="1">
    <location>
        <position position="85"/>
    </location>
    <ligand>
        <name>Mg(2+)</name>
        <dbReference type="ChEBI" id="CHEBI:18420"/>
    </ligand>
</feature>
<feature type="binding site" evidence="1">
    <location>
        <position position="115"/>
    </location>
    <ligand>
        <name>3-methyl-2-oxobutanoate</name>
        <dbReference type="ChEBI" id="CHEBI:11851"/>
    </ligand>
</feature>
<feature type="binding site" evidence="1">
    <location>
        <position position="117"/>
    </location>
    <ligand>
        <name>Mg(2+)</name>
        <dbReference type="ChEBI" id="CHEBI:18420"/>
    </ligand>
</feature>
<gene>
    <name evidence="1" type="primary">panB</name>
    <name type="ordered locus">Cthe_0902</name>
</gene>
<dbReference type="EC" id="2.1.2.11" evidence="1"/>
<dbReference type="EMBL" id="CP000568">
    <property type="protein sequence ID" value="ABN52136.1"/>
    <property type="molecule type" value="Genomic_DNA"/>
</dbReference>
<dbReference type="RefSeq" id="WP_003517259.1">
    <property type="nucleotide sequence ID" value="NC_009012.1"/>
</dbReference>
<dbReference type="SMR" id="A3DDV7"/>
<dbReference type="STRING" id="203119.Cthe_0902"/>
<dbReference type="GeneID" id="35802922"/>
<dbReference type="KEGG" id="cth:Cthe_0902"/>
<dbReference type="eggNOG" id="COG0413">
    <property type="taxonomic scope" value="Bacteria"/>
</dbReference>
<dbReference type="HOGENOM" id="CLU_036645_1_0_9"/>
<dbReference type="OrthoDB" id="9781789at2"/>
<dbReference type="UniPathway" id="UPA00028">
    <property type="reaction ID" value="UER00003"/>
</dbReference>
<dbReference type="Proteomes" id="UP000002145">
    <property type="component" value="Chromosome"/>
</dbReference>
<dbReference type="GO" id="GO:0005737">
    <property type="term" value="C:cytoplasm"/>
    <property type="evidence" value="ECO:0007669"/>
    <property type="project" value="UniProtKB-SubCell"/>
</dbReference>
<dbReference type="GO" id="GO:0003864">
    <property type="term" value="F:3-methyl-2-oxobutanoate hydroxymethyltransferase activity"/>
    <property type="evidence" value="ECO:0007669"/>
    <property type="project" value="UniProtKB-UniRule"/>
</dbReference>
<dbReference type="GO" id="GO:0000287">
    <property type="term" value="F:magnesium ion binding"/>
    <property type="evidence" value="ECO:0007669"/>
    <property type="project" value="TreeGrafter"/>
</dbReference>
<dbReference type="GO" id="GO:0015940">
    <property type="term" value="P:pantothenate biosynthetic process"/>
    <property type="evidence" value="ECO:0007669"/>
    <property type="project" value="UniProtKB-UniRule"/>
</dbReference>
<dbReference type="CDD" id="cd06557">
    <property type="entry name" value="KPHMT-like"/>
    <property type="match status" value="1"/>
</dbReference>
<dbReference type="FunFam" id="3.20.20.60:FF:000003">
    <property type="entry name" value="3-methyl-2-oxobutanoate hydroxymethyltransferase"/>
    <property type="match status" value="1"/>
</dbReference>
<dbReference type="Gene3D" id="3.20.20.60">
    <property type="entry name" value="Phosphoenolpyruvate-binding domains"/>
    <property type="match status" value="1"/>
</dbReference>
<dbReference type="HAMAP" id="MF_00156">
    <property type="entry name" value="PanB"/>
    <property type="match status" value="1"/>
</dbReference>
<dbReference type="InterPro" id="IPR003700">
    <property type="entry name" value="Pantoate_hydroxy_MeTrfase"/>
</dbReference>
<dbReference type="InterPro" id="IPR015813">
    <property type="entry name" value="Pyrv/PenolPyrv_kinase-like_dom"/>
</dbReference>
<dbReference type="InterPro" id="IPR040442">
    <property type="entry name" value="Pyrv_kinase-like_dom_sf"/>
</dbReference>
<dbReference type="NCBIfam" id="TIGR00222">
    <property type="entry name" value="panB"/>
    <property type="match status" value="1"/>
</dbReference>
<dbReference type="NCBIfam" id="NF001452">
    <property type="entry name" value="PRK00311.1"/>
    <property type="match status" value="1"/>
</dbReference>
<dbReference type="PANTHER" id="PTHR20881">
    <property type="entry name" value="3-METHYL-2-OXOBUTANOATE HYDROXYMETHYLTRANSFERASE"/>
    <property type="match status" value="1"/>
</dbReference>
<dbReference type="PANTHER" id="PTHR20881:SF0">
    <property type="entry name" value="3-METHYL-2-OXOBUTANOATE HYDROXYMETHYLTRANSFERASE"/>
    <property type="match status" value="1"/>
</dbReference>
<dbReference type="Pfam" id="PF02548">
    <property type="entry name" value="Pantoate_transf"/>
    <property type="match status" value="1"/>
</dbReference>
<dbReference type="PIRSF" id="PIRSF000388">
    <property type="entry name" value="Pantoate_hydroxy_MeTrfase"/>
    <property type="match status" value="1"/>
</dbReference>
<dbReference type="SUPFAM" id="SSF51621">
    <property type="entry name" value="Phosphoenolpyruvate/pyruvate domain"/>
    <property type="match status" value="1"/>
</dbReference>
<reference key="1">
    <citation type="submission" date="2007-02" db="EMBL/GenBank/DDBJ databases">
        <title>Complete sequence of Clostridium thermocellum ATCC 27405.</title>
        <authorList>
            <consortium name="US DOE Joint Genome Institute"/>
            <person name="Copeland A."/>
            <person name="Lucas S."/>
            <person name="Lapidus A."/>
            <person name="Barry K."/>
            <person name="Detter J.C."/>
            <person name="Glavina del Rio T."/>
            <person name="Hammon N."/>
            <person name="Israni S."/>
            <person name="Dalin E."/>
            <person name="Tice H."/>
            <person name="Pitluck S."/>
            <person name="Chertkov O."/>
            <person name="Brettin T."/>
            <person name="Bruce D."/>
            <person name="Han C."/>
            <person name="Tapia R."/>
            <person name="Gilna P."/>
            <person name="Schmutz J."/>
            <person name="Larimer F."/>
            <person name="Land M."/>
            <person name="Hauser L."/>
            <person name="Kyrpides N."/>
            <person name="Mikhailova N."/>
            <person name="Wu J.H.D."/>
            <person name="Newcomb M."/>
            <person name="Richardson P."/>
        </authorList>
    </citation>
    <scope>NUCLEOTIDE SEQUENCE [LARGE SCALE GENOMIC DNA]</scope>
    <source>
        <strain>ATCC 27405 / DSM 1237 / JCM 9322 / NBRC 103400 / NCIMB 10682 / NRRL B-4536 / VPI 7372</strain>
    </source>
</reference>
<organism>
    <name type="scientific">Acetivibrio thermocellus (strain ATCC 27405 / DSM 1237 / JCM 9322 / NBRC 103400 / NCIMB 10682 / NRRL B-4536 / VPI 7372)</name>
    <name type="common">Clostridium thermocellum</name>
    <dbReference type="NCBI Taxonomy" id="203119"/>
    <lineage>
        <taxon>Bacteria</taxon>
        <taxon>Bacillati</taxon>
        <taxon>Bacillota</taxon>
        <taxon>Clostridia</taxon>
        <taxon>Eubacteriales</taxon>
        <taxon>Oscillospiraceae</taxon>
        <taxon>Acetivibrio</taxon>
    </lineage>
</organism>
<protein>
    <recommendedName>
        <fullName evidence="1">3-methyl-2-oxobutanoate hydroxymethyltransferase</fullName>
        <ecNumber evidence="1">2.1.2.11</ecNumber>
    </recommendedName>
    <alternativeName>
        <fullName evidence="1">Ketopantoate hydroxymethyltransferase</fullName>
        <shortName evidence="1">KPHMT</shortName>
    </alternativeName>
</protein>
<name>PANB_ACET2</name>
<sequence>MNDKFTTASFLESKKQGRKITMLTAYDYPTAKILDEAGVDSILVGDSLGMVVLGYEDTTRVTMDDMVHHTKAVVRGVKRAMVVADMPFLSYHTGKNDSVRNAGRLVSEGGCKAVKLEGGEDIIENVKAIISAGIPVVGHLGYTPQSINVFGGHKAQGKTIDTAKKIYRDALLLQKAGVFAVVLECVPYKLAAFISKRLDIPTIGIGSGPDCDGQVLVIHDLTGMFKDFTPKHVKKYAEIGETVSTAVKSYIDEVKNGVFPTEKNSFKVDDWIIDELDKVRFDI</sequence>
<accession>A3DDV7</accession>
<proteinExistence type="inferred from homology"/>
<evidence type="ECO:0000255" key="1">
    <source>
        <dbReference type="HAMAP-Rule" id="MF_00156"/>
    </source>
</evidence>